<comment type="catalytic activity">
    <reaction evidence="1">
        <text>L-citrulline + L-aspartate + ATP = 2-(N(omega)-L-arginino)succinate + AMP + diphosphate + H(+)</text>
        <dbReference type="Rhea" id="RHEA:10932"/>
        <dbReference type="ChEBI" id="CHEBI:15378"/>
        <dbReference type="ChEBI" id="CHEBI:29991"/>
        <dbReference type="ChEBI" id="CHEBI:30616"/>
        <dbReference type="ChEBI" id="CHEBI:33019"/>
        <dbReference type="ChEBI" id="CHEBI:57472"/>
        <dbReference type="ChEBI" id="CHEBI:57743"/>
        <dbReference type="ChEBI" id="CHEBI:456215"/>
        <dbReference type="EC" id="6.3.4.5"/>
    </reaction>
</comment>
<comment type="pathway">
    <text evidence="1">Amino-acid biosynthesis; L-arginine biosynthesis; L-arginine from L-ornithine and carbamoyl phosphate: step 2/3.</text>
</comment>
<comment type="subunit">
    <text evidence="1">Homotetramer.</text>
</comment>
<comment type="subcellular location">
    <subcellularLocation>
        <location evidence="1">Cytoplasm</location>
    </subcellularLocation>
</comment>
<comment type="similarity">
    <text evidence="1">Belongs to the argininosuccinate synthase family. Type 1 subfamily.</text>
</comment>
<comment type="sequence caution" evidence="2">
    <conflict type="erroneous initiation">
        <sequence resource="EMBL-CDS" id="AAK98906"/>
    </conflict>
</comment>
<dbReference type="EC" id="6.3.4.5" evidence="1"/>
<dbReference type="EMBL" id="AE007317">
    <property type="protein sequence ID" value="AAK98906.1"/>
    <property type="status" value="ALT_INIT"/>
    <property type="molecule type" value="Genomic_DNA"/>
</dbReference>
<dbReference type="PIR" id="F97884">
    <property type="entry name" value="F97884"/>
</dbReference>
<dbReference type="RefSeq" id="NP_357696.1">
    <property type="nucleotide sequence ID" value="NC_003098.1"/>
</dbReference>
<dbReference type="RefSeq" id="WP_001814401.1">
    <property type="nucleotide sequence ID" value="NC_003098.1"/>
</dbReference>
<dbReference type="SMR" id="Q8DRI5"/>
<dbReference type="STRING" id="171101.spr0102"/>
<dbReference type="KEGG" id="spr:spr0102"/>
<dbReference type="PATRIC" id="fig|171101.6.peg.121"/>
<dbReference type="eggNOG" id="COG0137">
    <property type="taxonomic scope" value="Bacteria"/>
</dbReference>
<dbReference type="HOGENOM" id="CLU_032784_4_2_9"/>
<dbReference type="UniPathway" id="UPA00068">
    <property type="reaction ID" value="UER00113"/>
</dbReference>
<dbReference type="Proteomes" id="UP000000586">
    <property type="component" value="Chromosome"/>
</dbReference>
<dbReference type="GO" id="GO:0005737">
    <property type="term" value="C:cytoplasm"/>
    <property type="evidence" value="ECO:0000318"/>
    <property type="project" value="GO_Central"/>
</dbReference>
<dbReference type="GO" id="GO:0004055">
    <property type="term" value="F:argininosuccinate synthase activity"/>
    <property type="evidence" value="ECO:0000318"/>
    <property type="project" value="GO_Central"/>
</dbReference>
<dbReference type="GO" id="GO:0005524">
    <property type="term" value="F:ATP binding"/>
    <property type="evidence" value="ECO:0007669"/>
    <property type="project" value="UniProtKB-UniRule"/>
</dbReference>
<dbReference type="GO" id="GO:0000053">
    <property type="term" value="P:argininosuccinate metabolic process"/>
    <property type="evidence" value="ECO:0000318"/>
    <property type="project" value="GO_Central"/>
</dbReference>
<dbReference type="GO" id="GO:0006526">
    <property type="term" value="P:L-arginine biosynthetic process"/>
    <property type="evidence" value="ECO:0000318"/>
    <property type="project" value="GO_Central"/>
</dbReference>
<dbReference type="GO" id="GO:0000050">
    <property type="term" value="P:urea cycle"/>
    <property type="evidence" value="ECO:0000318"/>
    <property type="project" value="GO_Central"/>
</dbReference>
<dbReference type="CDD" id="cd01999">
    <property type="entry name" value="ASS"/>
    <property type="match status" value="1"/>
</dbReference>
<dbReference type="FunFam" id="1.20.5.470:FF:000002">
    <property type="entry name" value="Argininosuccinate synthase"/>
    <property type="match status" value="1"/>
</dbReference>
<dbReference type="FunFam" id="3.40.50.620:FF:000038">
    <property type="entry name" value="Argininosuccinate synthase"/>
    <property type="match status" value="1"/>
</dbReference>
<dbReference type="FunFam" id="3.90.1260.10:FF:000007">
    <property type="entry name" value="Argininosuccinate synthase"/>
    <property type="match status" value="1"/>
</dbReference>
<dbReference type="Gene3D" id="3.90.1260.10">
    <property type="entry name" value="Argininosuccinate synthetase, chain A, domain 2"/>
    <property type="match status" value="1"/>
</dbReference>
<dbReference type="Gene3D" id="3.40.50.620">
    <property type="entry name" value="HUPs"/>
    <property type="match status" value="1"/>
</dbReference>
<dbReference type="Gene3D" id="1.20.5.470">
    <property type="entry name" value="Single helix bin"/>
    <property type="match status" value="1"/>
</dbReference>
<dbReference type="HAMAP" id="MF_00005">
    <property type="entry name" value="Arg_succ_synth_type1"/>
    <property type="match status" value="1"/>
</dbReference>
<dbReference type="InterPro" id="IPR048268">
    <property type="entry name" value="Arginosuc_syn_C"/>
</dbReference>
<dbReference type="InterPro" id="IPR048267">
    <property type="entry name" value="Arginosuc_syn_N"/>
</dbReference>
<dbReference type="InterPro" id="IPR001518">
    <property type="entry name" value="Arginosuc_synth"/>
</dbReference>
<dbReference type="InterPro" id="IPR018223">
    <property type="entry name" value="Arginosuc_synth_CS"/>
</dbReference>
<dbReference type="InterPro" id="IPR023434">
    <property type="entry name" value="Arginosuc_synth_type_1_subfam"/>
</dbReference>
<dbReference type="InterPro" id="IPR024074">
    <property type="entry name" value="AS_cat/multimer_dom_body"/>
</dbReference>
<dbReference type="InterPro" id="IPR014729">
    <property type="entry name" value="Rossmann-like_a/b/a_fold"/>
</dbReference>
<dbReference type="NCBIfam" id="TIGR00032">
    <property type="entry name" value="argG"/>
    <property type="match status" value="1"/>
</dbReference>
<dbReference type="NCBIfam" id="NF001770">
    <property type="entry name" value="PRK00509.1"/>
    <property type="match status" value="1"/>
</dbReference>
<dbReference type="PANTHER" id="PTHR11587">
    <property type="entry name" value="ARGININOSUCCINATE SYNTHASE"/>
    <property type="match status" value="1"/>
</dbReference>
<dbReference type="PANTHER" id="PTHR11587:SF2">
    <property type="entry name" value="ARGININOSUCCINATE SYNTHASE"/>
    <property type="match status" value="1"/>
</dbReference>
<dbReference type="Pfam" id="PF20979">
    <property type="entry name" value="Arginosuc_syn_C"/>
    <property type="match status" value="1"/>
</dbReference>
<dbReference type="Pfam" id="PF00764">
    <property type="entry name" value="Arginosuc_synth"/>
    <property type="match status" value="1"/>
</dbReference>
<dbReference type="SUPFAM" id="SSF52402">
    <property type="entry name" value="Adenine nucleotide alpha hydrolases-like"/>
    <property type="match status" value="1"/>
</dbReference>
<dbReference type="SUPFAM" id="SSF69864">
    <property type="entry name" value="Argininosuccinate synthetase, C-terminal domain"/>
    <property type="match status" value="1"/>
</dbReference>
<dbReference type="PROSITE" id="PS00564">
    <property type="entry name" value="ARGININOSUCCIN_SYN_1"/>
    <property type="match status" value="1"/>
</dbReference>
<dbReference type="PROSITE" id="PS00565">
    <property type="entry name" value="ARGININOSUCCIN_SYN_2"/>
    <property type="match status" value="1"/>
</dbReference>
<protein>
    <recommendedName>
        <fullName evidence="1">Argininosuccinate synthase</fullName>
        <ecNumber evidence="1">6.3.4.5</ecNumber>
    </recommendedName>
    <alternativeName>
        <fullName evidence="1">Citrulline--aspartate ligase</fullName>
    </alternativeName>
</protein>
<name>ASSY_STRR6</name>
<gene>
    <name evidence="1" type="primary">argG</name>
    <name type="ordered locus">spr0102</name>
</gene>
<proteinExistence type="inferred from homology"/>
<keyword id="KW-0028">Amino-acid biosynthesis</keyword>
<keyword id="KW-0055">Arginine biosynthesis</keyword>
<keyword id="KW-0067">ATP-binding</keyword>
<keyword id="KW-0963">Cytoplasm</keyword>
<keyword id="KW-0436">Ligase</keyword>
<keyword id="KW-0547">Nucleotide-binding</keyword>
<keyword id="KW-1185">Reference proteome</keyword>
<feature type="chain" id="PRO_0000148648" description="Argininosuccinate synthase">
    <location>
        <begin position="1"/>
        <end position="398"/>
    </location>
</feature>
<feature type="binding site" evidence="1">
    <location>
        <begin position="9"/>
        <end position="17"/>
    </location>
    <ligand>
        <name>ATP</name>
        <dbReference type="ChEBI" id="CHEBI:30616"/>
    </ligand>
</feature>
<feature type="binding site" evidence="1">
    <location>
        <position position="85"/>
    </location>
    <ligand>
        <name>L-citrulline</name>
        <dbReference type="ChEBI" id="CHEBI:57743"/>
    </ligand>
</feature>
<feature type="binding site" evidence="1">
    <location>
        <position position="115"/>
    </location>
    <ligand>
        <name>ATP</name>
        <dbReference type="ChEBI" id="CHEBI:30616"/>
    </ligand>
</feature>
<feature type="binding site" evidence="1">
    <location>
        <position position="117"/>
    </location>
    <ligand>
        <name>L-aspartate</name>
        <dbReference type="ChEBI" id="CHEBI:29991"/>
    </ligand>
</feature>
<feature type="binding site" evidence="1">
    <location>
        <position position="121"/>
    </location>
    <ligand>
        <name>L-aspartate</name>
        <dbReference type="ChEBI" id="CHEBI:29991"/>
    </ligand>
</feature>
<feature type="binding site" evidence="1">
    <location>
        <position position="121"/>
    </location>
    <ligand>
        <name>L-citrulline</name>
        <dbReference type="ChEBI" id="CHEBI:57743"/>
    </ligand>
</feature>
<feature type="binding site" evidence="1">
    <location>
        <position position="122"/>
    </location>
    <ligand>
        <name>L-aspartate</name>
        <dbReference type="ChEBI" id="CHEBI:29991"/>
    </ligand>
</feature>
<feature type="binding site" evidence="1">
    <location>
        <position position="125"/>
    </location>
    <ligand>
        <name>L-citrulline</name>
        <dbReference type="ChEBI" id="CHEBI:57743"/>
    </ligand>
</feature>
<feature type="binding site" evidence="1">
    <location>
        <position position="173"/>
    </location>
    <ligand>
        <name>L-citrulline</name>
        <dbReference type="ChEBI" id="CHEBI:57743"/>
    </ligand>
</feature>
<feature type="binding site" evidence="1">
    <location>
        <position position="258"/>
    </location>
    <ligand>
        <name>L-citrulline</name>
        <dbReference type="ChEBI" id="CHEBI:57743"/>
    </ligand>
</feature>
<feature type="binding site" evidence="1">
    <location>
        <position position="270"/>
    </location>
    <ligand>
        <name>L-citrulline</name>
        <dbReference type="ChEBI" id="CHEBI:57743"/>
    </ligand>
</feature>
<sequence length="398" mass="44065">MSKEKVILAYSGGLDTSVAITWLKKDYDVVAVCMDVGEGKDLDFIHDKALKVGAVESYVIDVKDEFATDYVLVAHQSHAYYEQKYPLVSALSRPLISKKLVEIAHQIGATTIAHGCTGKGNDQVRFEVSIAALDLNLKVIAPVREWKWSREEEIYYAKENGVPVPADLDNPYSVDQNLWGRANECGILENPWNQAPEEAFGITTSPEQAPDMPEYIEIEFSEGVPVSLNGEVLKLADLIQKLNEIAGKHGVGRIDHVENRLVGIKSREIYECPGAVTLLTAHKEIEDLTLVREVAHFKPIIENELSNLIYNALWFSSATQALIAYIKETQKVVNGTAKVKLYKGSAQVVARKSPSSLYDENLATYTSADTFDQDAAVGFIKLWGLPTKVHSEVQKSAK</sequence>
<reference key="1">
    <citation type="journal article" date="2001" name="J. Bacteriol.">
        <title>Genome of the bacterium Streptococcus pneumoniae strain R6.</title>
        <authorList>
            <person name="Hoskins J."/>
            <person name="Alborn W.E. Jr."/>
            <person name="Arnold J."/>
            <person name="Blaszczak L.C."/>
            <person name="Burgett S."/>
            <person name="DeHoff B.S."/>
            <person name="Estrem S.T."/>
            <person name="Fritz L."/>
            <person name="Fu D.-J."/>
            <person name="Fuller W."/>
            <person name="Geringer C."/>
            <person name="Gilmour R."/>
            <person name="Glass J.S."/>
            <person name="Khoja H."/>
            <person name="Kraft A.R."/>
            <person name="Lagace R.E."/>
            <person name="LeBlanc D.J."/>
            <person name="Lee L.N."/>
            <person name="Lefkowitz E.J."/>
            <person name="Lu J."/>
            <person name="Matsushima P."/>
            <person name="McAhren S.M."/>
            <person name="McHenney M."/>
            <person name="McLeaster K."/>
            <person name="Mundy C.W."/>
            <person name="Nicas T.I."/>
            <person name="Norris F.H."/>
            <person name="O'Gara M."/>
            <person name="Peery R.B."/>
            <person name="Robertson G.T."/>
            <person name="Rockey P."/>
            <person name="Sun P.-M."/>
            <person name="Winkler M.E."/>
            <person name="Yang Y."/>
            <person name="Young-Bellido M."/>
            <person name="Zhao G."/>
            <person name="Zook C.A."/>
            <person name="Baltz R.H."/>
            <person name="Jaskunas S.R."/>
            <person name="Rosteck P.R. Jr."/>
            <person name="Skatrud P.L."/>
            <person name="Glass J.I."/>
        </authorList>
    </citation>
    <scope>NUCLEOTIDE SEQUENCE [LARGE SCALE GENOMIC DNA]</scope>
    <source>
        <strain>ATCC BAA-255 / R6</strain>
    </source>
</reference>
<accession>Q8DRI5</accession>
<organism>
    <name type="scientific">Streptococcus pneumoniae (strain ATCC BAA-255 / R6)</name>
    <dbReference type="NCBI Taxonomy" id="171101"/>
    <lineage>
        <taxon>Bacteria</taxon>
        <taxon>Bacillati</taxon>
        <taxon>Bacillota</taxon>
        <taxon>Bacilli</taxon>
        <taxon>Lactobacillales</taxon>
        <taxon>Streptococcaceae</taxon>
        <taxon>Streptococcus</taxon>
    </lineage>
</organism>
<evidence type="ECO:0000255" key="1">
    <source>
        <dbReference type="HAMAP-Rule" id="MF_00005"/>
    </source>
</evidence>
<evidence type="ECO:0000305" key="2"/>